<comment type="function">
    <text evidence="1">Catalyzes the phosphorylation of the position 2 hydroxy group of 4-diphosphocytidyl-2C-methyl-D-erythritol.</text>
</comment>
<comment type="catalytic activity">
    <reaction evidence="1">
        <text>4-CDP-2-C-methyl-D-erythritol + ATP = 4-CDP-2-C-methyl-D-erythritol 2-phosphate + ADP + H(+)</text>
        <dbReference type="Rhea" id="RHEA:18437"/>
        <dbReference type="ChEBI" id="CHEBI:15378"/>
        <dbReference type="ChEBI" id="CHEBI:30616"/>
        <dbReference type="ChEBI" id="CHEBI:57823"/>
        <dbReference type="ChEBI" id="CHEBI:57919"/>
        <dbReference type="ChEBI" id="CHEBI:456216"/>
        <dbReference type="EC" id="2.7.1.148"/>
    </reaction>
</comment>
<comment type="pathway">
    <text evidence="1">Isoprenoid biosynthesis; isopentenyl diphosphate biosynthesis via DXP pathway; isopentenyl diphosphate from 1-deoxy-D-xylulose 5-phosphate: step 3/6.</text>
</comment>
<comment type="similarity">
    <text evidence="1">Belongs to the GHMP kinase family. IspE subfamily.</text>
</comment>
<comment type="sequence caution" evidence="2">
    <conflict type="erroneous initiation">
        <sequence resource="EMBL-CDS" id="AAX88254"/>
    </conflict>
</comment>
<name>ISPE_HAEI8</name>
<sequence>MKSHQFSTALCQNTTQSNGQPLRFPSPAKLNLFLYINGKLPNGYHELQTLFQFLDFGDWLDISIREQDNQIVLTPEIPNLKTENNLIYRAAKLLQEKANIQLGANIHLDKILPMGGGVGGGSSNAATALVSLNYLWQANLSIDELAKLGLTLGADVPIFVYGQAAFAEGVGEKITYCEPAEKWFVILKPDDSISTAVIFQDPNLPRNTPKKSLEQLLSEPYKNDCEKVVINHYSNVEKALNWLLQYAPARLTGTGACVFAEFDHEAEAQAVFRQKPEAFFGFVAKGLNVSPLHAMLKQLSSTHTHRQSKPEVL</sequence>
<gene>
    <name evidence="1" type="primary">ispE</name>
    <name type="ordered locus">NTHI1434</name>
</gene>
<feature type="chain" id="PRO_0000235097" description="4-diphosphocytidyl-2-C-methyl-D-erythritol kinase">
    <location>
        <begin position="1"/>
        <end position="313"/>
    </location>
</feature>
<feature type="active site" evidence="1">
    <location>
        <position position="29"/>
    </location>
</feature>
<feature type="active site" evidence="1">
    <location>
        <position position="155"/>
    </location>
</feature>
<feature type="binding site" evidence="1">
    <location>
        <begin position="113"/>
        <end position="123"/>
    </location>
    <ligand>
        <name>ATP</name>
        <dbReference type="ChEBI" id="CHEBI:30616"/>
    </ligand>
</feature>
<dbReference type="EC" id="2.7.1.148" evidence="1"/>
<dbReference type="EMBL" id="CP000057">
    <property type="protein sequence ID" value="AAX88254.1"/>
    <property type="status" value="ALT_INIT"/>
    <property type="molecule type" value="Genomic_DNA"/>
</dbReference>
<dbReference type="RefSeq" id="WP_032827554.1">
    <property type="nucleotide sequence ID" value="NC_007146.2"/>
</dbReference>
<dbReference type="SMR" id="Q4QL43"/>
<dbReference type="GeneID" id="93220263"/>
<dbReference type="KEGG" id="hit:NTHI1434"/>
<dbReference type="HOGENOM" id="CLU_053057_3_0_6"/>
<dbReference type="UniPathway" id="UPA00056">
    <property type="reaction ID" value="UER00094"/>
</dbReference>
<dbReference type="Proteomes" id="UP000002525">
    <property type="component" value="Chromosome"/>
</dbReference>
<dbReference type="GO" id="GO:0050515">
    <property type="term" value="F:4-(cytidine 5'-diphospho)-2-C-methyl-D-erythritol kinase activity"/>
    <property type="evidence" value="ECO:0007669"/>
    <property type="project" value="UniProtKB-UniRule"/>
</dbReference>
<dbReference type="GO" id="GO:0005524">
    <property type="term" value="F:ATP binding"/>
    <property type="evidence" value="ECO:0007669"/>
    <property type="project" value="UniProtKB-UniRule"/>
</dbReference>
<dbReference type="GO" id="GO:0019288">
    <property type="term" value="P:isopentenyl diphosphate biosynthetic process, methylerythritol 4-phosphate pathway"/>
    <property type="evidence" value="ECO:0007669"/>
    <property type="project" value="UniProtKB-UniRule"/>
</dbReference>
<dbReference type="GO" id="GO:0016114">
    <property type="term" value="P:terpenoid biosynthetic process"/>
    <property type="evidence" value="ECO:0007669"/>
    <property type="project" value="InterPro"/>
</dbReference>
<dbReference type="FunFam" id="3.30.230.10:FF:000022">
    <property type="entry name" value="4-diphosphocytidyl-2-C-methyl-D-erythritol kinase"/>
    <property type="match status" value="1"/>
</dbReference>
<dbReference type="FunFam" id="3.30.70.890:FF:000004">
    <property type="entry name" value="4-diphosphocytidyl-2-C-methyl-D-erythritol kinase"/>
    <property type="match status" value="1"/>
</dbReference>
<dbReference type="Gene3D" id="3.30.230.10">
    <property type="match status" value="1"/>
</dbReference>
<dbReference type="Gene3D" id="3.30.70.890">
    <property type="entry name" value="GHMP kinase, C-terminal domain"/>
    <property type="match status" value="1"/>
</dbReference>
<dbReference type="HAMAP" id="MF_00061">
    <property type="entry name" value="IspE"/>
    <property type="match status" value="1"/>
</dbReference>
<dbReference type="InterPro" id="IPR013750">
    <property type="entry name" value="GHMP_kinase_C_dom"/>
</dbReference>
<dbReference type="InterPro" id="IPR036554">
    <property type="entry name" value="GHMP_kinase_C_sf"/>
</dbReference>
<dbReference type="InterPro" id="IPR006204">
    <property type="entry name" value="GHMP_kinase_N_dom"/>
</dbReference>
<dbReference type="InterPro" id="IPR004424">
    <property type="entry name" value="IspE"/>
</dbReference>
<dbReference type="InterPro" id="IPR020568">
    <property type="entry name" value="Ribosomal_Su5_D2-typ_SF"/>
</dbReference>
<dbReference type="InterPro" id="IPR014721">
    <property type="entry name" value="Ribsml_uS5_D2-typ_fold_subgr"/>
</dbReference>
<dbReference type="NCBIfam" id="TIGR00154">
    <property type="entry name" value="ispE"/>
    <property type="match status" value="1"/>
</dbReference>
<dbReference type="PANTHER" id="PTHR43527">
    <property type="entry name" value="4-DIPHOSPHOCYTIDYL-2-C-METHYL-D-ERYTHRITOL KINASE, CHLOROPLASTIC"/>
    <property type="match status" value="1"/>
</dbReference>
<dbReference type="PANTHER" id="PTHR43527:SF2">
    <property type="entry name" value="4-DIPHOSPHOCYTIDYL-2-C-METHYL-D-ERYTHRITOL KINASE, CHLOROPLASTIC"/>
    <property type="match status" value="1"/>
</dbReference>
<dbReference type="Pfam" id="PF08544">
    <property type="entry name" value="GHMP_kinases_C"/>
    <property type="match status" value="1"/>
</dbReference>
<dbReference type="Pfam" id="PF00288">
    <property type="entry name" value="GHMP_kinases_N"/>
    <property type="match status" value="1"/>
</dbReference>
<dbReference type="PIRSF" id="PIRSF010376">
    <property type="entry name" value="IspE"/>
    <property type="match status" value="1"/>
</dbReference>
<dbReference type="SUPFAM" id="SSF55060">
    <property type="entry name" value="GHMP Kinase, C-terminal domain"/>
    <property type="match status" value="1"/>
</dbReference>
<dbReference type="SUPFAM" id="SSF54211">
    <property type="entry name" value="Ribosomal protein S5 domain 2-like"/>
    <property type="match status" value="1"/>
</dbReference>
<organism>
    <name type="scientific">Haemophilus influenzae (strain 86-028NP)</name>
    <dbReference type="NCBI Taxonomy" id="281310"/>
    <lineage>
        <taxon>Bacteria</taxon>
        <taxon>Pseudomonadati</taxon>
        <taxon>Pseudomonadota</taxon>
        <taxon>Gammaproteobacteria</taxon>
        <taxon>Pasteurellales</taxon>
        <taxon>Pasteurellaceae</taxon>
        <taxon>Haemophilus</taxon>
    </lineage>
</organism>
<accession>Q4QL43</accession>
<keyword id="KW-0067">ATP-binding</keyword>
<keyword id="KW-0414">Isoprene biosynthesis</keyword>
<keyword id="KW-0418">Kinase</keyword>
<keyword id="KW-0547">Nucleotide-binding</keyword>
<keyword id="KW-0808">Transferase</keyword>
<protein>
    <recommendedName>
        <fullName evidence="1">4-diphosphocytidyl-2-C-methyl-D-erythritol kinase</fullName>
        <shortName evidence="1">CMK</shortName>
        <ecNumber evidence="1">2.7.1.148</ecNumber>
    </recommendedName>
    <alternativeName>
        <fullName evidence="1">4-(cytidine-5'-diphospho)-2-C-methyl-D-erythritol kinase</fullName>
    </alternativeName>
</protein>
<proteinExistence type="inferred from homology"/>
<evidence type="ECO:0000255" key="1">
    <source>
        <dbReference type="HAMAP-Rule" id="MF_00061"/>
    </source>
</evidence>
<evidence type="ECO:0000305" key="2"/>
<reference key="1">
    <citation type="journal article" date="2005" name="J. Bacteriol.">
        <title>Genomic sequence of an otitis media isolate of nontypeable Haemophilus influenzae: comparative study with H. influenzae serotype d, strain KW20.</title>
        <authorList>
            <person name="Harrison A."/>
            <person name="Dyer D.W."/>
            <person name="Gillaspy A."/>
            <person name="Ray W.C."/>
            <person name="Mungur R."/>
            <person name="Carson M.B."/>
            <person name="Zhong H."/>
            <person name="Gipson J."/>
            <person name="Gipson M."/>
            <person name="Johnson L.S."/>
            <person name="Lewis L."/>
            <person name="Bakaletz L.O."/>
            <person name="Munson R.S. Jr."/>
        </authorList>
    </citation>
    <scope>NUCLEOTIDE SEQUENCE [LARGE SCALE GENOMIC DNA]</scope>
    <source>
        <strain>86-028NP</strain>
    </source>
</reference>